<accession>B0RV00</accession>
<organism>
    <name type="scientific">Xanthomonas campestris pv. campestris (strain B100)</name>
    <dbReference type="NCBI Taxonomy" id="509169"/>
    <lineage>
        <taxon>Bacteria</taxon>
        <taxon>Pseudomonadati</taxon>
        <taxon>Pseudomonadota</taxon>
        <taxon>Gammaproteobacteria</taxon>
        <taxon>Lysobacterales</taxon>
        <taxon>Lysobacteraceae</taxon>
        <taxon>Xanthomonas</taxon>
    </lineage>
</organism>
<proteinExistence type="inferred from homology"/>
<reference key="1">
    <citation type="journal article" date="2008" name="J. Biotechnol.">
        <title>The genome of Xanthomonas campestris pv. campestris B100 and its use for the reconstruction of metabolic pathways involved in xanthan biosynthesis.</title>
        <authorList>
            <person name="Vorhoelter F.-J."/>
            <person name="Schneiker S."/>
            <person name="Goesmann A."/>
            <person name="Krause L."/>
            <person name="Bekel T."/>
            <person name="Kaiser O."/>
            <person name="Linke B."/>
            <person name="Patschkowski T."/>
            <person name="Rueckert C."/>
            <person name="Schmid J."/>
            <person name="Sidhu V.K."/>
            <person name="Sieber V."/>
            <person name="Tauch A."/>
            <person name="Watt S.A."/>
            <person name="Weisshaar B."/>
            <person name="Becker A."/>
            <person name="Niehaus K."/>
            <person name="Puehler A."/>
        </authorList>
    </citation>
    <scope>NUCLEOTIDE SEQUENCE [LARGE SCALE GENOMIC DNA]</scope>
    <source>
        <strain>B100</strain>
    </source>
</reference>
<protein>
    <recommendedName>
        <fullName evidence="1">Kynurenine 3-monooxygenase</fullName>
        <ecNumber evidence="1">1.14.13.9</ecNumber>
    </recommendedName>
    <alternativeName>
        <fullName evidence="1">Kynurenine 3-hydroxylase</fullName>
    </alternativeName>
</protein>
<gene>
    <name evidence="1" type="primary">kmo</name>
    <name type="ordered locus">xcc-b100_2708</name>
</gene>
<keyword id="KW-0274">FAD</keyword>
<keyword id="KW-0285">Flavoprotein</keyword>
<keyword id="KW-0503">Monooxygenase</keyword>
<keyword id="KW-0521">NADP</keyword>
<keyword id="KW-0560">Oxidoreductase</keyword>
<keyword id="KW-0662">Pyridine nucleotide biosynthesis</keyword>
<feature type="chain" id="PRO_0000361949" description="Kynurenine 3-monooxygenase">
    <location>
        <begin position="1"/>
        <end position="456"/>
    </location>
</feature>
<evidence type="ECO:0000255" key="1">
    <source>
        <dbReference type="HAMAP-Rule" id="MF_01971"/>
    </source>
</evidence>
<name>KMO_XANCB</name>
<sequence>MSAAASPRSLTLIGAGLAGCLLAILLSRRGWQITLYERRGDPRIKGYESGRSINLALAERGRHALRQACAEDAVMAKAVMMRGRMIHPVSGEPQLQRYGRDDSEVIWSIHRAALNVTLLDLAEQAGARVHFYRRLHTVDFDAGYARFIDDRDDQPHEIHFQALVGSDGAGSALRAAMQRKAPVGEHIAFLDHSYKELEIPPRADGGFRIERNALHIWPRGRYMCIALPNDGGTFTVTLFLPNEGMPSFATTRSGDEALALFARDFPDALPLIPQLKEHWEEHPPGLLGTLTRERWHLDGRAVLLGDAAHAMVPFHGQGMNCAFEDCVALAEQLDAHSDLSEAFAAFEAARRDDAAAIQQMALENYLEMRDRVGDAQFLLQRALEQQLQARWPTRFVPHYTMVTFLRTRYAIALARSEIQREILLEATHGHTDLSRIDWVALETVVHARLEPLEGAH</sequence>
<dbReference type="EC" id="1.14.13.9" evidence="1"/>
<dbReference type="EMBL" id="AM920689">
    <property type="protein sequence ID" value="CAP52069.1"/>
    <property type="molecule type" value="Genomic_DNA"/>
</dbReference>
<dbReference type="SMR" id="B0RV00"/>
<dbReference type="KEGG" id="xca:xcc-b100_2708"/>
<dbReference type="HOGENOM" id="CLU_023210_0_1_6"/>
<dbReference type="UniPathway" id="UPA00253">
    <property type="reaction ID" value="UER00328"/>
</dbReference>
<dbReference type="Proteomes" id="UP000001188">
    <property type="component" value="Chromosome"/>
</dbReference>
<dbReference type="GO" id="GO:0071949">
    <property type="term" value="F:FAD binding"/>
    <property type="evidence" value="ECO:0007669"/>
    <property type="project" value="InterPro"/>
</dbReference>
<dbReference type="GO" id="GO:0004502">
    <property type="term" value="F:kynurenine 3-monooxygenase activity"/>
    <property type="evidence" value="ECO:0007669"/>
    <property type="project" value="UniProtKB-UniRule"/>
</dbReference>
<dbReference type="GO" id="GO:0043420">
    <property type="term" value="P:anthranilate metabolic process"/>
    <property type="evidence" value="ECO:0007669"/>
    <property type="project" value="UniProtKB-UniRule"/>
</dbReference>
<dbReference type="GO" id="GO:0070189">
    <property type="term" value="P:kynurenine metabolic process"/>
    <property type="evidence" value="ECO:0007669"/>
    <property type="project" value="TreeGrafter"/>
</dbReference>
<dbReference type="GO" id="GO:0006569">
    <property type="term" value="P:L-tryptophan catabolic process"/>
    <property type="evidence" value="ECO:0007669"/>
    <property type="project" value="UniProtKB-UniRule"/>
</dbReference>
<dbReference type="GO" id="GO:0009435">
    <property type="term" value="P:NAD biosynthetic process"/>
    <property type="evidence" value="ECO:0007669"/>
    <property type="project" value="UniProtKB-UniPathway"/>
</dbReference>
<dbReference type="GO" id="GO:0019805">
    <property type="term" value="P:quinolinate biosynthetic process"/>
    <property type="evidence" value="ECO:0007669"/>
    <property type="project" value="UniProtKB-UniRule"/>
</dbReference>
<dbReference type="FunFam" id="3.50.50.60:FF:000185">
    <property type="entry name" value="Kynurenine 3-monooxygenase"/>
    <property type="match status" value="1"/>
</dbReference>
<dbReference type="Gene3D" id="3.50.50.60">
    <property type="entry name" value="FAD/NAD(P)-binding domain"/>
    <property type="match status" value="1"/>
</dbReference>
<dbReference type="HAMAP" id="MF_01971">
    <property type="entry name" value="Kynurenine_monooxygenase"/>
    <property type="match status" value="1"/>
</dbReference>
<dbReference type="InterPro" id="IPR002938">
    <property type="entry name" value="FAD-bd"/>
</dbReference>
<dbReference type="InterPro" id="IPR036188">
    <property type="entry name" value="FAD/NAD-bd_sf"/>
</dbReference>
<dbReference type="InterPro" id="IPR027545">
    <property type="entry name" value="Kynurenine_monooxygenase"/>
</dbReference>
<dbReference type="PANTHER" id="PTHR46028">
    <property type="entry name" value="KYNURENINE 3-MONOOXYGENASE"/>
    <property type="match status" value="1"/>
</dbReference>
<dbReference type="PANTHER" id="PTHR46028:SF2">
    <property type="entry name" value="KYNURENINE 3-MONOOXYGENASE"/>
    <property type="match status" value="1"/>
</dbReference>
<dbReference type="Pfam" id="PF01494">
    <property type="entry name" value="FAD_binding_3"/>
    <property type="match status" value="2"/>
</dbReference>
<dbReference type="PRINTS" id="PR00420">
    <property type="entry name" value="RNGMNOXGNASE"/>
</dbReference>
<dbReference type="SUPFAM" id="SSF51905">
    <property type="entry name" value="FAD/NAD(P)-binding domain"/>
    <property type="match status" value="1"/>
</dbReference>
<comment type="function">
    <text evidence="1">Catalyzes the hydroxylation of L-kynurenine (L-Kyn) to form 3-hydroxy-L-kynurenine (L-3OHKyn). Required for synthesis of quinolinic acid.</text>
</comment>
<comment type="catalytic activity">
    <reaction evidence="1">
        <text>L-kynurenine + NADPH + O2 + H(+) = 3-hydroxy-L-kynurenine + NADP(+) + H2O</text>
        <dbReference type="Rhea" id="RHEA:20545"/>
        <dbReference type="ChEBI" id="CHEBI:15377"/>
        <dbReference type="ChEBI" id="CHEBI:15378"/>
        <dbReference type="ChEBI" id="CHEBI:15379"/>
        <dbReference type="ChEBI" id="CHEBI:57783"/>
        <dbReference type="ChEBI" id="CHEBI:57959"/>
        <dbReference type="ChEBI" id="CHEBI:58125"/>
        <dbReference type="ChEBI" id="CHEBI:58349"/>
        <dbReference type="EC" id="1.14.13.9"/>
    </reaction>
</comment>
<comment type="cofactor">
    <cofactor evidence="1">
        <name>FAD</name>
        <dbReference type="ChEBI" id="CHEBI:57692"/>
    </cofactor>
</comment>
<comment type="pathway">
    <text evidence="1">Cofactor biosynthesis; NAD(+) biosynthesis; quinolinate from L-kynurenine: step 1/3.</text>
</comment>
<comment type="similarity">
    <text evidence="1">Belongs to the aromatic-ring hydroxylase family. KMO subfamily.</text>
</comment>